<keyword id="KW-0249">Electron transport</keyword>
<keyword id="KW-0349">Heme</keyword>
<keyword id="KW-0408">Iron</keyword>
<keyword id="KW-0472">Membrane</keyword>
<keyword id="KW-0479">Metal-binding</keyword>
<keyword id="KW-0496">Mitochondrion</keyword>
<keyword id="KW-0999">Mitochondrion inner membrane</keyword>
<keyword id="KW-0679">Respiratory chain</keyword>
<keyword id="KW-0812">Transmembrane</keyword>
<keyword id="KW-1133">Transmembrane helix</keyword>
<keyword id="KW-0813">Transport</keyword>
<keyword id="KW-0830">Ubiquinone</keyword>
<name>CYB_PELNI</name>
<organism>
    <name type="scientific">Pelophylax nigromaculatus</name>
    <name type="common">Black-spotted frog</name>
    <name type="synonym">Rana nigromaculata</name>
    <dbReference type="NCBI Taxonomy" id="8409"/>
    <lineage>
        <taxon>Eukaryota</taxon>
        <taxon>Metazoa</taxon>
        <taxon>Chordata</taxon>
        <taxon>Craniata</taxon>
        <taxon>Vertebrata</taxon>
        <taxon>Euteleostomi</taxon>
        <taxon>Amphibia</taxon>
        <taxon>Batrachia</taxon>
        <taxon>Anura</taxon>
        <taxon>Neobatrachia</taxon>
        <taxon>Ranoidea</taxon>
        <taxon>Ranidae</taxon>
        <taxon>Pelophylax</taxon>
    </lineage>
</organism>
<protein>
    <recommendedName>
        <fullName>Cytochrome b</fullName>
    </recommendedName>
    <alternativeName>
        <fullName>Complex III subunit 3</fullName>
    </alternativeName>
    <alternativeName>
        <fullName>Complex III subunit III</fullName>
    </alternativeName>
    <alternativeName>
        <fullName>Cytochrome b-c1 complex subunit 3</fullName>
    </alternativeName>
    <alternativeName>
        <fullName>Ubiquinol-cytochrome-c reductase complex cytochrome b subunit</fullName>
    </alternativeName>
</protein>
<reference key="1">
    <citation type="submission" date="1999-11" db="EMBL/GenBank/DDBJ databases">
        <title>Genetic relationships of mitochondrial cytochrome b gene among six Korean Rana species.</title>
        <authorList>
            <person name="Lee J.-E."/>
            <person name="Lee H.-Y."/>
            <person name="Yang S.-Y."/>
        </authorList>
    </citation>
    <scope>NUCLEOTIDE SEQUENCE [GENOMIC DNA]</scope>
</reference>
<feature type="chain" id="PRO_0000061484" description="Cytochrome b">
    <location>
        <begin position="1"/>
        <end position="380"/>
    </location>
</feature>
<feature type="transmembrane region" description="Helical" evidence="2">
    <location>
        <begin position="34"/>
        <end position="54"/>
    </location>
</feature>
<feature type="transmembrane region" description="Helical" evidence="2">
    <location>
        <begin position="78"/>
        <end position="99"/>
    </location>
</feature>
<feature type="transmembrane region" description="Helical" evidence="2">
    <location>
        <begin position="114"/>
        <end position="134"/>
    </location>
</feature>
<feature type="transmembrane region" description="Helical" evidence="2">
    <location>
        <begin position="179"/>
        <end position="199"/>
    </location>
</feature>
<feature type="transmembrane region" description="Helical" evidence="2">
    <location>
        <begin position="227"/>
        <end position="247"/>
    </location>
</feature>
<feature type="transmembrane region" description="Helical" evidence="2">
    <location>
        <begin position="289"/>
        <end position="309"/>
    </location>
</feature>
<feature type="transmembrane region" description="Helical" evidence="2">
    <location>
        <begin position="321"/>
        <end position="341"/>
    </location>
</feature>
<feature type="transmembrane region" description="Helical" evidence="2">
    <location>
        <begin position="348"/>
        <end position="368"/>
    </location>
</feature>
<feature type="binding site" description="axial binding residue" evidence="2">
    <location>
        <position position="84"/>
    </location>
    <ligand>
        <name>heme b</name>
        <dbReference type="ChEBI" id="CHEBI:60344"/>
        <label>b562</label>
    </ligand>
    <ligandPart>
        <name>Fe</name>
        <dbReference type="ChEBI" id="CHEBI:18248"/>
    </ligandPart>
</feature>
<feature type="binding site" description="axial binding residue" evidence="2">
    <location>
        <position position="98"/>
    </location>
    <ligand>
        <name>heme b</name>
        <dbReference type="ChEBI" id="CHEBI:60344"/>
        <label>b566</label>
    </ligand>
    <ligandPart>
        <name>Fe</name>
        <dbReference type="ChEBI" id="CHEBI:18248"/>
    </ligandPart>
</feature>
<feature type="binding site" description="axial binding residue" evidence="2">
    <location>
        <position position="183"/>
    </location>
    <ligand>
        <name>heme b</name>
        <dbReference type="ChEBI" id="CHEBI:60344"/>
        <label>b562</label>
    </ligand>
    <ligandPart>
        <name>Fe</name>
        <dbReference type="ChEBI" id="CHEBI:18248"/>
    </ligandPart>
</feature>
<feature type="binding site" description="axial binding residue" evidence="2">
    <location>
        <position position="197"/>
    </location>
    <ligand>
        <name>heme b</name>
        <dbReference type="ChEBI" id="CHEBI:60344"/>
        <label>b566</label>
    </ligand>
    <ligandPart>
        <name>Fe</name>
        <dbReference type="ChEBI" id="CHEBI:18248"/>
    </ligandPart>
</feature>
<feature type="binding site" evidence="2">
    <location>
        <position position="202"/>
    </location>
    <ligand>
        <name>a ubiquinone</name>
        <dbReference type="ChEBI" id="CHEBI:16389"/>
    </ligand>
</feature>
<accession>Q9T6R9</accession>
<dbReference type="EMBL" id="AF205087">
    <property type="protein sequence ID" value="AAF17086.1"/>
    <property type="molecule type" value="Genomic_DNA"/>
</dbReference>
<dbReference type="SMR" id="Q9T6R9"/>
<dbReference type="GO" id="GO:0005743">
    <property type="term" value="C:mitochondrial inner membrane"/>
    <property type="evidence" value="ECO:0007669"/>
    <property type="project" value="UniProtKB-SubCell"/>
</dbReference>
<dbReference type="GO" id="GO:0045275">
    <property type="term" value="C:respiratory chain complex III"/>
    <property type="evidence" value="ECO:0007669"/>
    <property type="project" value="InterPro"/>
</dbReference>
<dbReference type="GO" id="GO:0046872">
    <property type="term" value="F:metal ion binding"/>
    <property type="evidence" value="ECO:0007669"/>
    <property type="project" value="UniProtKB-KW"/>
</dbReference>
<dbReference type="GO" id="GO:0008121">
    <property type="term" value="F:ubiquinol-cytochrome-c reductase activity"/>
    <property type="evidence" value="ECO:0007669"/>
    <property type="project" value="InterPro"/>
</dbReference>
<dbReference type="GO" id="GO:0006122">
    <property type="term" value="P:mitochondrial electron transport, ubiquinol to cytochrome c"/>
    <property type="evidence" value="ECO:0007669"/>
    <property type="project" value="TreeGrafter"/>
</dbReference>
<dbReference type="CDD" id="cd00290">
    <property type="entry name" value="cytochrome_b_C"/>
    <property type="match status" value="1"/>
</dbReference>
<dbReference type="CDD" id="cd00284">
    <property type="entry name" value="Cytochrome_b_N"/>
    <property type="match status" value="1"/>
</dbReference>
<dbReference type="FunFam" id="1.20.810.10:FF:000002">
    <property type="entry name" value="Cytochrome b"/>
    <property type="match status" value="1"/>
</dbReference>
<dbReference type="Gene3D" id="1.20.810.10">
    <property type="entry name" value="Cytochrome Bc1 Complex, Chain C"/>
    <property type="match status" value="1"/>
</dbReference>
<dbReference type="InterPro" id="IPR005798">
    <property type="entry name" value="Cyt_b/b6_C"/>
</dbReference>
<dbReference type="InterPro" id="IPR036150">
    <property type="entry name" value="Cyt_b/b6_C_sf"/>
</dbReference>
<dbReference type="InterPro" id="IPR005797">
    <property type="entry name" value="Cyt_b/b6_N"/>
</dbReference>
<dbReference type="InterPro" id="IPR027387">
    <property type="entry name" value="Cytb/b6-like_sf"/>
</dbReference>
<dbReference type="InterPro" id="IPR030689">
    <property type="entry name" value="Cytochrome_b"/>
</dbReference>
<dbReference type="InterPro" id="IPR048260">
    <property type="entry name" value="Cytochrome_b_C_euk/bac"/>
</dbReference>
<dbReference type="InterPro" id="IPR048259">
    <property type="entry name" value="Cytochrome_b_N_euk/bac"/>
</dbReference>
<dbReference type="InterPro" id="IPR016174">
    <property type="entry name" value="Di-haem_cyt_TM"/>
</dbReference>
<dbReference type="PANTHER" id="PTHR19271">
    <property type="entry name" value="CYTOCHROME B"/>
    <property type="match status" value="1"/>
</dbReference>
<dbReference type="PANTHER" id="PTHR19271:SF16">
    <property type="entry name" value="CYTOCHROME B"/>
    <property type="match status" value="1"/>
</dbReference>
<dbReference type="Pfam" id="PF00032">
    <property type="entry name" value="Cytochrom_B_C"/>
    <property type="match status" value="1"/>
</dbReference>
<dbReference type="Pfam" id="PF00033">
    <property type="entry name" value="Cytochrome_B"/>
    <property type="match status" value="1"/>
</dbReference>
<dbReference type="PIRSF" id="PIRSF038885">
    <property type="entry name" value="COB"/>
    <property type="match status" value="1"/>
</dbReference>
<dbReference type="SUPFAM" id="SSF81648">
    <property type="entry name" value="a domain/subunit of cytochrome bc1 complex (Ubiquinol-cytochrome c reductase)"/>
    <property type="match status" value="1"/>
</dbReference>
<dbReference type="SUPFAM" id="SSF81342">
    <property type="entry name" value="Transmembrane di-heme cytochromes"/>
    <property type="match status" value="1"/>
</dbReference>
<dbReference type="PROSITE" id="PS51003">
    <property type="entry name" value="CYTB_CTER"/>
    <property type="match status" value="1"/>
</dbReference>
<dbReference type="PROSITE" id="PS51002">
    <property type="entry name" value="CYTB_NTER"/>
    <property type="match status" value="1"/>
</dbReference>
<proteinExistence type="inferred from homology"/>
<geneLocation type="mitochondrion"/>
<evidence type="ECO:0000250" key="1"/>
<evidence type="ECO:0000250" key="2">
    <source>
        <dbReference type="UniProtKB" id="P00157"/>
    </source>
</evidence>
<evidence type="ECO:0000255" key="3">
    <source>
        <dbReference type="PROSITE-ProRule" id="PRU00967"/>
    </source>
</evidence>
<evidence type="ECO:0000255" key="4">
    <source>
        <dbReference type="PROSITE-ProRule" id="PRU00968"/>
    </source>
</evidence>
<comment type="function">
    <text evidence="2">Component of the ubiquinol-cytochrome c reductase complex (complex III or cytochrome b-c1 complex) that is part of the mitochondrial respiratory chain. The b-c1 complex mediates electron transfer from ubiquinol to cytochrome c. Contributes to the generation of a proton gradient across the mitochondrial membrane that is then used for ATP synthesis.</text>
</comment>
<comment type="cofactor">
    <cofactor evidence="2">
        <name>heme b</name>
        <dbReference type="ChEBI" id="CHEBI:60344"/>
    </cofactor>
    <text evidence="2">Binds 2 heme b groups non-covalently.</text>
</comment>
<comment type="subunit">
    <text evidence="2">The cytochrome bc1 complex contains 3 respiratory subunits (MT-CYB, CYC1 and UQCRFS1), 2 core proteins (UQCRC1 and UQCRC2) and probably 6 low-molecular weight proteins.</text>
</comment>
<comment type="subcellular location">
    <subcellularLocation>
        <location evidence="2">Mitochondrion inner membrane</location>
        <topology evidence="2">Multi-pass membrane protein</topology>
    </subcellularLocation>
</comment>
<comment type="miscellaneous">
    <text evidence="1">Heme 1 (or BL or b562) is low-potential and absorbs at about 562 nm, and heme 2 (or BH or b566) is high-potential and absorbs at about 566 nm.</text>
</comment>
<comment type="similarity">
    <text evidence="3 4">Belongs to the cytochrome b family.</text>
</comment>
<comment type="caution">
    <text evidence="2">The full-length protein contains only eight transmembrane helices, not nine as predicted by bioinformatics tools.</text>
</comment>
<sequence>MAPTIRKSHPLLKIINGSFIDLPTPANISAWWNFGSLLGVCLIAQIATGLFLAMHYTADTSLAFSSVAHICRDVNNGWLLRNLHANGASFFFICIYFHIGRGLYYGSYLYKETWNIGVILLFLVMATAFVGYVLPWGQMSFWGATVITNLLSAAPYIGPDLVQWIWGGFSVDNSTLTRFFTFHFILPFIIAAASMIHLLFLHQTGSSNPTGLNSNLDKVSFHPYFSYKDLLGFVIMLGALASLSTFAPNLLGDPDNFTPANPLVTPPHIKPEWYFLFAYAILRSIPNKLGGVLALLLSIMVLFLMPIIHTSKLRSLMFRPIAKTFFWALIANTAILTWIGGQPVEDPFITIGQIASGLYFLIFVLLIPSLGLLENKLLKI</sequence>
<gene>
    <name type="primary">mt-cyb</name>
    <name type="synonym">cob</name>
    <name type="synonym">cytb</name>
    <name type="synonym">mtcyb</name>
</gene>